<sequence>MIKTTLLFFATALCEIIGCFLPWLWLKRGASVFLLLPAGIALALFVWLLTLHPAASGRVYAAYGGVYVCTALLWLRVVDGVKLSAYDWAGALVALCGMLIIVAGWGRT</sequence>
<protein>
    <recommendedName>
        <fullName evidence="1">UPF0060 membrane protein Ent638_1931</fullName>
    </recommendedName>
</protein>
<accession>A4WA77</accession>
<dbReference type="EMBL" id="CP000653">
    <property type="protein sequence ID" value="ABP60607.1"/>
    <property type="molecule type" value="Genomic_DNA"/>
</dbReference>
<dbReference type="RefSeq" id="WP_012017322.1">
    <property type="nucleotide sequence ID" value="NC_009436.1"/>
</dbReference>
<dbReference type="SMR" id="A4WA77"/>
<dbReference type="STRING" id="399742.Ent638_1931"/>
<dbReference type="KEGG" id="ent:Ent638_1931"/>
<dbReference type="eggNOG" id="COG1742">
    <property type="taxonomic scope" value="Bacteria"/>
</dbReference>
<dbReference type="HOGENOM" id="CLU_117653_2_1_6"/>
<dbReference type="OrthoDB" id="123240at2"/>
<dbReference type="Proteomes" id="UP000000230">
    <property type="component" value="Chromosome"/>
</dbReference>
<dbReference type="GO" id="GO:0005886">
    <property type="term" value="C:plasma membrane"/>
    <property type="evidence" value="ECO:0007669"/>
    <property type="project" value="UniProtKB-SubCell"/>
</dbReference>
<dbReference type="HAMAP" id="MF_00010">
    <property type="entry name" value="UPF0060"/>
    <property type="match status" value="1"/>
</dbReference>
<dbReference type="InterPro" id="IPR003844">
    <property type="entry name" value="UPF0060"/>
</dbReference>
<dbReference type="NCBIfam" id="NF002586">
    <property type="entry name" value="PRK02237.1"/>
    <property type="match status" value="1"/>
</dbReference>
<dbReference type="PANTHER" id="PTHR36116">
    <property type="entry name" value="UPF0060 MEMBRANE PROTEIN YNFA"/>
    <property type="match status" value="1"/>
</dbReference>
<dbReference type="PANTHER" id="PTHR36116:SF1">
    <property type="entry name" value="UPF0060 MEMBRANE PROTEIN YNFA"/>
    <property type="match status" value="1"/>
</dbReference>
<dbReference type="Pfam" id="PF02694">
    <property type="entry name" value="UPF0060"/>
    <property type="match status" value="1"/>
</dbReference>
<dbReference type="SUPFAM" id="SSF103481">
    <property type="entry name" value="Multidrug resistance efflux transporter EmrE"/>
    <property type="match status" value="1"/>
</dbReference>
<proteinExistence type="inferred from homology"/>
<reference key="1">
    <citation type="journal article" date="2010" name="PLoS Genet.">
        <title>Genome sequence of the plant growth promoting endophytic bacterium Enterobacter sp. 638.</title>
        <authorList>
            <person name="Taghavi S."/>
            <person name="van der Lelie D."/>
            <person name="Hoffman A."/>
            <person name="Zhang Y.B."/>
            <person name="Walla M.D."/>
            <person name="Vangronsveld J."/>
            <person name="Newman L."/>
            <person name="Monchy S."/>
        </authorList>
    </citation>
    <scope>NUCLEOTIDE SEQUENCE [LARGE SCALE GENOMIC DNA]</scope>
    <source>
        <strain>638</strain>
    </source>
</reference>
<comment type="subcellular location">
    <subcellularLocation>
        <location evidence="1">Cell inner membrane</location>
        <topology evidence="1">Multi-pass membrane protein</topology>
    </subcellularLocation>
</comment>
<comment type="similarity">
    <text evidence="1">Belongs to the UPF0060 family.</text>
</comment>
<evidence type="ECO:0000255" key="1">
    <source>
        <dbReference type="HAMAP-Rule" id="MF_00010"/>
    </source>
</evidence>
<feature type="chain" id="PRO_1000057080" description="UPF0060 membrane protein Ent638_1931">
    <location>
        <begin position="1"/>
        <end position="108"/>
    </location>
</feature>
<feature type="transmembrane region" description="Helical" evidence="1">
    <location>
        <begin position="6"/>
        <end position="26"/>
    </location>
</feature>
<feature type="transmembrane region" description="Helical" evidence="1">
    <location>
        <begin position="29"/>
        <end position="49"/>
    </location>
</feature>
<feature type="transmembrane region" description="Helical" evidence="1">
    <location>
        <begin position="61"/>
        <end position="81"/>
    </location>
</feature>
<feature type="transmembrane region" description="Helical" evidence="1">
    <location>
        <begin position="85"/>
        <end position="105"/>
    </location>
</feature>
<keyword id="KW-0997">Cell inner membrane</keyword>
<keyword id="KW-1003">Cell membrane</keyword>
<keyword id="KW-0472">Membrane</keyword>
<keyword id="KW-0812">Transmembrane</keyword>
<keyword id="KW-1133">Transmembrane helix</keyword>
<name>Y1931_ENT38</name>
<organism>
    <name type="scientific">Enterobacter sp. (strain 638)</name>
    <dbReference type="NCBI Taxonomy" id="399742"/>
    <lineage>
        <taxon>Bacteria</taxon>
        <taxon>Pseudomonadati</taxon>
        <taxon>Pseudomonadota</taxon>
        <taxon>Gammaproteobacteria</taxon>
        <taxon>Enterobacterales</taxon>
        <taxon>Enterobacteriaceae</taxon>
        <taxon>Enterobacter</taxon>
    </lineage>
</organism>
<gene>
    <name type="ordered locus">Ent638_1931</name>
</gene>